<sequence>MDLSESMEVDNGTTSENLKHVQITFFSKDKDLPEIPDAVFDVPTVAECDDLNLLLNKTIQATDDAWKEKKFEFLVGETFLRTSLAEFIEEYEVETETILKIECIIGIEAPKPLHDIQAPDWVSSVQVANGHTKSTNLFSIFSTTYGGDIVIVDRKGKETKLSVNSANRILKCSGIVRTTKKVQLEGTEFIVGGENQLLTLYEIEKGALVEKIVFRGHERAVECVSVNSDATRAISGSVDTNLKVWNLDPSDEATIYEKEEEESSAKKKRKKDTRTKVPMVTIGGHRDKVSSVVWCPWKSGHAFSCSWDHTVVQWDLELAGEVSRIKGPKSFTSIDIHPTSNLLISSCTDAIPRLYDPKNRDGAMVKQSFIGHQNGWVESVKWNPVDENQFVSVSTDKTAKMWDVRSSKSSLFDIHGHEDRILCAAWNEGLIATGSADCSIKIFETS</sequence>
<name>WDR12_CAEBR</name>
<dbReference type="EMBL" id="HE600904">
    <property type="protein sequence ID" value="CAP33326.2"/>
    <property type="molecule type" value="Genomic_DNA"/>
</dbReference>
<dbReference type="SMR" id="A8XL02"/>
<dbReference type="FunCoup" id="A8XL02">
    <property type="interactions" value="2343"/>
</dbReference>
<dbReference type="STRING" id="6238.A8XL02"/>
<dbReference type="WormBase" id="CBG14922">
    <property type="protein sequence ID" value="CBP18128"/>
    <property type="gene ID" value="WBGene00035296"/>
    <property type="gene designation" value="Cbr-wdr-12"/>
</dbReference>
<dbReference type="eggNOG" id="KOG0313">
    <property type="taxonomic scope" value="Eukaryota"/>
</dbReference>
<dbReference type="HOGENOM" id="CLU_000288_57_0_1"/>
<dbReference type="InParanoid" id="A8XL02"/>
<dbReference type="OMA" id="DIQAPDW"/>
<dbReference type="Proteomes" id="UP000008549">
    <property type="component" value="Unassembled WGS sequence"/>
</dbReference>
<dbReference type="GO" id="GO:0005654">
    <property type="term" value="C:nucleoplasm"/>
    <property type="evidence" value="ECO:0007669"/>
    <property type="project" value="UniProtKB-SubCell"/>
</dbReference>
<dbReference type="GO" id="GO:0070545">
    <property type="term" value="C:PeBoW complex"/>
    <property type="evidence" value="ECO:0000250"/>
    <property type="project" value="UniProtKB"/>
</dbReference>
<dbReference type="GO" id="GO:0030687">
    <property type="term" value="C:preribosome, large subunit precursor"/>
    <property type="evidence" value="ECO:0007669"/>
    <property type="project" value="UniProtKB-UniRule"/>
</dbReference>
<dbReference type="GO" id="GO:0043021">
    <property type="term" value="F:ribonucleoprotein complex binding"/>
    <property type="evidence" value="ECO:0007669"/>
    <property type="project" value="UniProtKB-UniRule"/>
</dbReference>
<dbReference type="GO" id="GO:0000466">
    <property type="term" value="P:maturation of 5.8S rRNA from tricistronic rRNA transcript (SSU-rRNA, 5.8S rRNA, LSU-rRNA)"/>
    <property type="evidence" value="ECO:0007669"/>
    <property type="project" value="UniProtKB-UniRule"/>
</dbReference>
<dbReference type="GO" id="GO:0000463">
    <property type="term" value="P:maturation of LSU-rRNA from tricistronic rRNA transcript (SSU-rRNA, 5.8S rRNA, LSU-rRNA)"/>
    <property type="evidence" value="ECO:0000250"/>
    <property type="project" value="UniProtKB"/>
</dbReference>
<dbReference type="Gene3D" id="2.130.10.10">
    <property type="entry name" value="YVTN repeat-like/Quinoprotein amine dehydrogenase"/>
    <property type="match status" value="2"/>
</dbReference>
<dbReference type="HAMAP" id="MF_03029">
    <property type="entry name" value="WDR12"/>
    <property type="match status" value="1"/>
</dbReference>
<dbReference type="InterPro" id="IPR012972">
    <property type="entry name" value="NLE"/>
</dbReference>
<dbReference type="InterPro" id="IPR015943">
    <property type="entry name" value="WD40/YVTN_repeat-like_dom_sf"/>
</dbReference>
<dbReference type="InterPro" id="IPR019775">
    <property type="entry name" value="WD40_repeat_CS"/>
</dbReference>
<dbReference type="InterPro" id="IPR036322">
    <property type="entry name" value="WD40_repeat_dom_sf"/>
</dbReference>
<dbReference type="InterPro" id="IPR001680">
    <property type="entry name" value="WD40_rpt"/>
</dbReference>
<dbReference type="InterPro" id="IPR028599">
    <property type="entry name" value="WDR12/Ytm1"/>
</dbReference>
<dbReference type="PANTHER" id="PTHR19855:SF11">
    <property type="entry name" value="RIBOSOME BIOGENESIS PROTEIN WDR12"/>
    <property type="match status" value="1"/>
</dbReference>
<dbReference type="PANTHER" id="PTHR19855">
    <property type="entry name" value="WD40 REPEAT PROTEIN 12, 37"/>
    <property type="match status" value="1"/>
</dbReference>
<dbReference type="Pfam" id="PF08154">
    <property type="entry name" value="NLE"/>
    <property type="match status" value="1"/>
</dbReference>
<dbReference type="Pfam" id="PF00400">
    <property type="entry name" value="WD40"/>
    <property type="match status" value="5"/>
</dbReference>
<dbReference type="SMART" id="SM00320">
    <property type="entry name" value="WD40"/>
    <property type="match status" value="5"/>
</dbReference>
<dbReference type="SUPFAM" id="SSF50978">
    <property type="entry name" value="WD40 repeat-like"/>
    <property type="match status" value="1"/>
</dbReference>
<dbReference type="PROSITE" id="PS00678">
    <property type="entry name" value="WD_REPEATS_1"/>
    <property type="match status" value="1"/>
</dbReference>
<dbReference type="PROSITE" id="PS50082">
    <property type="entry name" value="WD_REPEATS_2"/>
    <property type="match status" value="3"/>
</dbReference>
<dbReference type="PROSITE" id="PS50294">
    <property type="entry name" value="WD_REPEATS_REGION"/>
    <property type="match status" value="1"/>
</dbReference>
<accession>A8XL02</accession>
<proteinExistence type="inferred from homology"/>
<feature type="chain" id="PRO_0000369551" description="Ribosome biogenesis protein WDR12 homolog">
    <location>
        <begin position="1"/>
        <end position="446"/>
    </location>
</feature>
<feature type="repeat" description="WD 1">
    <location>
        <begin position="171"/>
        <end position="211"/>
    </location>
</feature>
<feature type="repeat" description="WD 2">
    <location>
        <begin position="216"/>
        <end position="255"/>
    </location>
</feature>
<feature type="repeat" description="WD 3">
    <location>
        <begin position="284"/>
        <end position="324"/>
    </location>
</feature>
<feature type="repeat" description="WD 4">
    <location>
        <begin position="326"/>
        <end position="365"/>
    </location>
</feature>
<feature type="repeat" description="WD 5">
    <location>
        <begin position="371"/>
        <end position="412"/>
    </location>
</feature>
<feature type="repeat" description="WD 6">
    <location>
        <begin position="416"/>
        <end position="446"/>
    </location>
</feature>
<feature type="region of interest" description="Ubiquitin-like (UBL) domain" evidence="1">
    <location>
        <begin position="21"/>
        <end position="105"/>
    </location>
</feature>
<feature type="region of interest" description="Disordered" evidence="2">
    <location>
        <begin position="256"/>
        <end position="275"/>
    </location>
</feature>
<organism>
    <name type="scientific">Caenorhabditis briggsae</name>
    <dbReference type="NCBI Taxonomy" id="6238"/>
    <lineage>
        <taxon>Eukaryota</taxon>
        <taxon>Metazoa</taxon>
        <taxon>Ecdysozoa</taxon>
        <taxon>Nematoda</taxon>
        <taxon>Chromadorea</taxon>
        <taxon>Rhabditida</taxon>
        <taxon>Rhabditina</taxon>
        <taxon>Rhabditomorpha</taxon>
        <taxon>Rhabditoidea</taxon>
        <taxon>Rhabditidae</taxon>
        <taxon>Peloderinae</taxon>
        <taxon>Caenorhabditis</taxon>
    </lineage>
</organism>
<gene>
    <name evidence="1" type="primary">wdr-12</name>
    <name evidence="3" type="synonym">tag-345</name>
    <name evidence="3" type="ORF">CBG14922</name>
</gene>
<protein>
    <recommendedName>
        <fullName evidence="1">Ribosome biogenesis protein WDR12 homolog</fullName>
    </recommendedName>
</protein>
<comment type="function">
    <text evidence="1">Required for maturation of ribosomal RNAs and formation of the large ribosomal subunit.</text>
</comment>
<comment type="subcellular location">
    <subcellularLocation>
        <location evidence="1">Nucleus</location>
        <location evidence="1">Nucleolus</location>
    </subcellularLocation>
    <subcellularLocation>
        <location evidence="1">Nucleus</location>
        <location evidence="1">Nucleoplasm</location>
    </subcellularLocation>
</comment>
<comment type="similarity">
    <text evidence="1">Belongs to the WD repeat WDR12/YTM1 family.</text>
</comment>
<reference key="1">
    <citation type="journal article" date="2003" name="PLoS Biol.">
        <title>The genome sequence of Caenorhabditis briggsae: a platform for comparative genomics.</title>
        <authorList>
            <person name="Stein L.D."/>
            <person name="Bao Z."/>
            <person name="Blasiar D."/>
            <person name="Blumenthal T."/>
            <person name="Brent M.R."/>
            <person name="Chen N."/>
            <person name="Chinwalla A."/>
            <person name="Clarke L."/>
            <person name="Clee C."/>
            <person name="Coghlan A."/>
            <person name="Coulson A."/>
            <person name="D'Eustachio P."/>
            <person name="Fitch D.H.A."/>
            <person name="Fulton L.A."/>
            <person name="Fulton R.E."/>
            <person name="Griffiths-Jones S."/>
            <person name="Harris T.W."/>
            <person name="Hillier L.W."/>
            <person name="Kamath R."/>
            <person name="Kuwabara P.E."/>
            <person name="Mardis E.R."/>
            <person name="Marra M.A."/>
            <person name="Miner T.L."/>
            <person name="Minx P."/>
            <person name="Mullikin J.C."/>
            <person name="Plumb R.W."/>
            <person name="Rogers J."/>
            <person name="Schein J.E."/>
            <person name="Sohrmann M."/>
            <person name="Spieth J."/>
            <person name="Stajich J.E."/>
            <person name="Wei C."/>
            <person name="Willey D."/>
            <person name="Wilson R.K."/>
            <person name="Durbin R.M."/>
            <person name="Waterston R.H."/>
        </authorList>
    </citation>
    <scope>NUCLEOTIDE SEQUENCE [LARGE SCALE GENOMIC DNA]</scope>
    <source>
        <strain>AF16</strain>
    </source>
</reference>
<evidence type="ECO:0000255" key="1">
    <source>
        <dbReference type="HAMAP-Rule" id="MF_03029"/>
    </source>
</evidence>
<evidence type="ECO:0000256" key="2">
    <source>
        <dbReference type="SAM" id="MobiDB-lite"/>
    </source>
</evidence>
<evidence type="ECO:0000312" key="3">
    <source>
        <dbReference type="WormBase" id="CBG14922"/>
    </source>
</evidence>
<keyword id="KW-0539">Nucleus</keyword>
<keyword id="KW-1185">Reference proteome</keyword>
<keyword id="KW-0677">Repeat</keyword>
<keyword id="KW-0690">Ribosome biogenesis</keyword>
<keyword id="KW-0698">rRNA processing</keyword>
<keyword id="KW-0853">WD repeat</keyword>